<feature type="chain" id="PRO_1000003355" description="3-deoxy-manno-octulosonate cytidylyltransferase">
    <location>
        <begin position="1"/>
        <end position="254"/>
    </location>
</feature>
<keyword id="KW-0963">Cytoplasm</keyword>
<keyword id="KW-0448">Lipopolysaccharide biosynthesis</keyword>
<keyword id="KW-0548">Nucleotidyltransferase</keyword>
<keyword id="KW-0808">Transferase</keyword>
<sequence length="254" mass="28011">MFAFLTSKKVGILPSRWGSSRFPGKPLAKILGKTLVQRSYENALSSQSLDCVVVATDDQRIFDHVVEFGGLCVMTSTSCANGTERVEEVVSRHFPQAEIVVNIQGDEPCLSPTVIDGLVSTLENNPAADMVTSVTETTDPEAILTDHKVKCVFDKNGKALYFSRSAIPHNFKHPTPIYLHIGVYAFRKAFLSEYVKIPPSSLSLAEDLEQLRVLEIGRSIYVHVVQNATGPSVDYPEDITKVEQYLLCLSKASF</sequence>
<proteinExistence type="inferred from homology"/>
<organism>
    <name type="scientific">Chlamydia trachomatis serovar A (strain ATCC VR-571B / DSM 19440 / HAR-13)</name>
    <dbReference type="NCBI Taxonomy" id="315277"/>
    <lineage>
        <taxon>Bacteria</taxon>
        <taxon>Pseudomonadati</taxon>
        <taxon>Chlamydiota</taxon>
        <taxon>Chlamydiia</taxon>
        <taxon>Chlamydiales</taxon>
        <taxon>Chlamydiaceae</taxon>
        <taxon>Chlamydia/Chlamydophila group</taxon>
        <taxon>Chlamydia</taxon>
    </lineage>
</organism>
<accession>Q3KMI0</accession>
<reference key="1">
    <citation type="journal article" date="2005" name="Infect. Immun.">
        <title>Comparative genomic analysis of Chlamydia trachomatis oculotropic and genitotropic strains.</title>
        <authorList>
            <person name="Carlson J.H."/>
            <person name="Porcella S.F."/>
            <person name="McClarty G."/>
            <person name="Caldwell H.D."/>
        </authorList>
    </citation>
    <scope>NUCLEOTIDE SEQUENCE [LARGE SCALE GENOMIC DNA]</scope>
    <source>
        <strain>ATCC VR-571B / DSM 19440 / HAR-13</strain>
    </source>
</reference>
<comment type="function">
    <text evidence="1">Activates KDO (a required 8-carbon sugar) for incorporation into bacterial lipopolysaccharide in Gram-negative bacteria.</text>
</comment>
<comment type="catalytic activity">
    <reaction evidence="1">
        <text>3-deoxy-alpha-D-manno-oct-2-ulosonate + CTP = CMP-3-deoxy-beta-D-manno-octulosonate + diphosphate</text>
        <dbReference type="Rhea" id="RHEA:23448"/>
        <dbReference type="ChEBI" id="CHEBI:33019"/>
        <dbReference type="ChEBI" id="CHEBI:37563"/>
        <dbReference type="ChEBI" id="CHEBI:85986"/>
        <dbReference type="ChEBI" id="CHEBI:85987"/>
        <dbReference type="EC" id="2.7.7.38"/>
    </reaction>
</comment>
<comment type="pathway">
    <text evidence="1">Nucleotide-sugar biosynthesis; CMP-3-deoxy-D-manno-octulosonate biosynthesis; CMP-3-deoxy-D-manno-octulosonate from 3-deoxy-D-manno-octulosonate and CTP: step 1/1.</text>
</comment>
<comment type="pathway">
    <text evidence="1">Bacterial outer membrane biogenesis; lipopolysaccharide biosynthesis.</text>
</comment>
<comment type="subcellular location">
    <subcellularLocation>
        <location evidence="1">Cytoplasm</location>
    </subcellularLocation>
</comment>
<comment type="similarity">
    <text evidence="1">Belongs to the KdsB family.</text>
</comment>
<protein>
    <recommendedName>
        <fullName evidence="1">3-deoxy-manno-octulosonate cytidylyltransferase</fullName>
        <ecNumber evidence="1">2.7.7.38</ecNumber>
    </recommendedName>
    <alternativeName>
        <fullName evidence="1">CMP-2-keto-3-deoxyoctulosonic acid synthase</fullName>
        <shortName evidence="1">CKS</shortName>
        <shortName evidence="1">CMP-KDO synthase</shortName>
    </alternativeName>
</protein>
<evidence type="ECO:0000255" key="1">
    <source>
        <dbReference type="HAMAP-Rule" id="MF_00057"/>
    </source>
</evidence>
<gene>
    <name evidence="1" type="primary">kdsB</name>
    <name type="ordered locus">CTA_0200</name>
</gene>
<dbReference type="EC" id="2.7.7.38" evidence="1"/>
<dbReference type="EMBL" id="CP000051">
    <property type="protein sequence ID" value="AAX50442.1"/>
    <property type="molecule type" value="Genomic_DNA"/>
</dbReference>
<dbReference type="RefSeq" id="WP_009871528.1">
    <property type="nucleotide sequence ID" value="NC_007429.1"/>
</dbReference>
<dbReference type="SMR" id="Q3KMI0"/>
<dbReference type="KEGG" id="cta:CTA_0200"/>
<dbReference type="HOGENOM" id="CLU_065038_0_1_0"/>
<dbReference type="UniPathway" id="UPA00030"/>
<dbReference type="UniPathway" id="UPA00358">
    <property type="reaction ID" value="UER00476"/>
</dbReference>
<dbReference type="Proteomes" id="UP000002532">
    <property type="component" value="Chromosome"/>
</dbReference>
<dbReference type="GO" id="GO:0005829">
    <property type="term" value="C:cytosol"/>
    <property type="evidence" value="ECO:0007669"/>
    <property type="project" value="TreeGrafter"/>
</dbReference>
<dbReference type="GO" id="GO:0008690">
    <property type="term" value="F:3-deoxy-manno-octulosonate cytidylyltransferase activity"/>
    <property type="evidence" value="ECO:0007669"/>
    <property type="project" value="UniProtKB-UniRule"/>
</dbReference>
<dbReference type="GO" id="GO:0033468">
    <property type="term" value="P:CMP-keto-3-deoxy-D-manno-octulosonic acid biosynthetic process"/>
    <property type="evidence" value="ECO:0007669"/>
    <property type="project" value="UniProtKB-UniRule"/>
</dbReference>
<dbReference type="GO" id="GO:0009103">
    <property type="term" value="P:lipopolysaccharide biosynthetic process"/>
    <property type="evidence" value="ECO:0007669"/>
    <property type="project" value="UniProtKB-UniRule"/>
</dbReference>
<dbReference type="CDD" id="cd02517">
    <property type="entry name" value="CMP-KDO-Synthetase"/>
    <property type="match status" value="1"/>
</dbReference>
<dbReference type="FunFam" id="3.90.550.10:FF:000011">
    <property type="entry name" value="3-deoxy-manno-octulosonate cytidylyltransferase"/>
    <property type="match status" value="1"/>
</dbReference>
<dbReference type="Gene3D" id="3.90.550.10">
    <property type="entry name" value="Spore Coat Polysaccharide Biosynthesis Protein SpsA, Chain A"/>
    <property type="match status" value="1"/>
</dbReference>
<dbReference type="HAMAP" id="MF_00057">
    <property type="entry name" value="KdsB"/>
    <property type="match status" value="1"/>
</dbReference>
<dbReference type="InterPro" id="IPR003329">
    <property type="entry name" value="Cytidylyl_trans"/>
</dbReference>
<dbReference type="InterPro" id="IPR004528">
    <property type="entry name" value="KdsB"/>
</dbReference>
<dbReference type="InterPro" id="IPR029044">
    <property type="entry name" value="Nucleotide-diphossugar_trans"/>
</dbReference>
<dbReference type="NCBIfam" id="TIGR00466">
    <property type="entry name" value="kdsB"/>
    <property type="match status" value="1"/>
</dbReference>
<dbReference type="NCBIfam" id="NF003950">
    <property type="entry name" value="PRK05450.1-3"/>
    <property type="match status" value="1"/>
</dbReference>
<dbReference type="NCBIfam" id="NF003952">
    <property type="entry name" value="PRK05450.1-5"/>
    <property type="match status" value="1"/>
</dbReference>
<dbReference type="PANTHER" id="PTHR42866">
    <property type="entry name" value="3-DEOXY-MANNO-OCTULOSONATE CYTIDYLYLTRANSFERASE"/>
    <property type="match status" value="1"/>
</dbReference>
<dbReference type="PANTHER" id="PTHR42866:SF2">
    <property type="entry name" value="3-DEOXY-MANNO-OCTULOSONATE CYTIDYLYLTRANSFERASE, MITOCHONDRIAL"/>
    <property type="match status" value="1"/>
</dbReference>
<dbReference type="Pfam" id="PF02348">
    <property type="entry name" value="CTP_transf_3"/>
    <property type="match status" value="1"/>
</dbReference>
<dbReference type="SUPFAM" id="SSF53448">
    <property type="entry name" value="Nucleotide-diphospho-sugar transferases"/>
    <property type="match status" value="1"/>
</dbReference>
<name>KDSB_CHLTA</name>